<reference key="1">
    <citation type="journal article" date="2001" name="Nature">
        <title>Complete genome sequence of Salmonella enterica serovar Typhimurium LT2.</title>
        <authorList>
            <person name="McClelland M."/>
            <person name="Sanderson K.E."/>
            <person name="Spieth J."/>
            <person name="Clifton S.W."/>
            <person name="Latreille P."/>
            <person name="Courtney L."/>
            <person name="Porwollik S."/>
            <person name="Ali J."/>
            <person name="Dante M."/>
            <person name="Du F."/>
            <person name="Hou S."/>
            <person name="Layman D."/>
            <person name="Leonard S."/>
            <person name="Nguyen C."/>
            <person name="Scott K."/>
            <person name="Holmes A."/>
            <person name="Grewal N."/>
            <person name="Mulvaney E."/>
            <person name="Ryan E."/>
            <person name="Sun H."/>
            <person name="Florea L."/>
            <person name="Miller W."/>
            <person name="Stoneking T."/>
            <person name="Nhan M."/>
            <person name="Waterston R."/>
            <person name="Wilson R.K."/>
        </authorList>
    </citation>
    <scope>NUCLEOTIDE SEQUENCE [LARGE SCALE GENOMIC DNA]</scope>
    <source>
        <strain>LT2 / SGSC1412 / ATCC 700720</strain>
    </source>
</reference>
<reference key="2">
    <citation type="journal article" date="2020" name="Adv. Clin. Exp. Med.">
        <title>Salmonella Typhimurium enolase-like membrane protein is recognized by antibodies against human enolase and interacts with plasminogen.</title>
        <authorList>
            <person name="Serek P."/>
            <person name="Bednarz-Misa I."/>
            <person name="Pietkiewicz J."/>
            <person name="Dudek B."/>
            <person name="Mierzchala-Pasierb M."/>
            <person name="Jermakow K."/>
            <person name="Drab M."/>
            <person name="Gamian A."/>
        </authorList>
    </citation>
    <scope>IDENTIFICATION BY MASS SPECTROMETRY</scope>
    <scope>FUNCTION</scope>
    <scope>CATALYTIC ACTIVITY</scope>
    <scope>SUBCELLULAR LOCATION</scope>
    <scope>PLASMINOGEN-BINDING</scope>
</reference>
<name>ENO_SALTY</name>
<dbReference type="EC" id="4.2.1.11" evidence="2 4"/>
<dbReference type="EMBL" id="AE006468">
    <property type="protein sequence ID" value="AAL21832.1"/>
    <property type="molecule type" value="Genomic_DNA"/>
</dbReference>
<dbReference type="RefSeq" id="NP_461873.1">
    <property type="nucleotide sequence ID" value="NC_003197.2"/>
</dbReference>
<dbReference type="RefSeq" id="WP_000036734.1">
    <property type="nucleotide sequence ID" value="NC_003197.2"/>
</dbReference>
<dbReference type="SMR" id="P64076"/>
<dbReference type="STRING" id="99287.STM2952"/>
<dbReference type="PaxDb" id="99287-STM2952"/>
<dbReference type="GeneID" id="1254475"/>
<dbReference type="GeneID" id="66757270"/>
<dbReference type="KEGG" id="stm:STM2952"/>
<dbReference type="PATRIC" id="fig|99287.12.peg.3122"/>
<dbReference type="HOGENOM" id="CLU_031223_2_1_6"/>
<dbReference type="OMA" id="RCMMSHR"/>
<dbReference type="PhylomeDB" id="P64076"/>
<dbReference type="BioCyc" id="SENT99287:STM2952-MONOMER"/>
<dbReference type="UniPathway" id="UPA00109">
    <property type="reaction ID" value="UER00187"/>
</dbReference>
<dbReference type="Proteomes" id="UP000001014">
    <property type="component" value="Chromosome"/>
</dbReference>
<dbReference type="GO" id="GO:0009986">
    <property type="term" value="C:cell surface"/>
    <property type="evidence" value="ECO:0007669"/>
    <property type="project" value="UniProtKB-SubCell"/>
</dbReference>
<dbReference type="GO" id="GO:0005576">
    <property type="term" value="C:extracellular region"/>
    <property type="evidence" value="ECO:0007669"/>
    <property type="project" value="UniProtKB-SubCell"/>
</dbReference>
<dbReference type="GO" id="GO:0000015">
    <property type="term" value="C:phosphopyruvate hydratase complex"/>
    <property type="evidence" value="ECO:0000318"/>
    <property type="project" value="GO_Central"/>
</dbReference>
<dbReference type="GO" id="GO:0000287">
    <property type="term" value="F:magnesium ion binding"/>
    <property type="evidence" value="ECO:0007669"/>
    <property type="project" value="UniProtKB-UniRule"/>
</dbReference>
<dbReference type="GO" id="GO:0004634">
    <property type="term" value="F:phosphopyruvate hydratase activity"/>
    <property type="evidence" value="ECO:0000318"/>
    <property type="project" value="GO_Central"/>
</dbReference>
<dbReference type="GO" id="GO:0006096">
    <property type="term" value="P:glycolytic process"/>
    <property type="evidence" value="ECO:0000318"/>
    <property type="project" value="GO_Central"/>
</dbReference>
<dbReference type="CDD" id="cd03313">
    <property type="entry name" value="enolase"/>
    <property type="match status" value="1"/>
</dbReference>
<dbReference type="FunFam" id="3.20.20.120:FF:000001">
    <property type="entry name" value="Enolase"/>
    <property type="match status" value="1"/>
</dbReference>
<dbReference type="FunFam" id="3.30.390.10:FF:000001">
    <property type="entry name" value="Enolase"/>
    <property type="match status" value="1"/>
</dbReference>
<dbReference type="Gene3D" id="3.20.20.120">
    <property type="entry name" value="Enolase-like C-terminal domain"/>
    <property type="match status" value="1"/>
</dbReference>
<dbReference type="Gene3D" id="3.30.390.10">
    <property type="entry name" value="Enolase-like, N-terminal domain"/>
    <property type="match status" value="1"/>
</dbReference>
<dbReference type="HAMAP" id="MF_00318">
    <property type="entry name" value="Enolase"/>
    <property type="match status" value="1"/>
</dbReference>
<dbReference type="InterPro" id="IPR000941">
    <property type="entry name" value="Enolase"/>
</dbReference>
<dbReference type="InterPro" id="IPR036849">
    <property type="entry name" value="Enolase-like_C_sf"/>
</dbReference>
<dbReference type="InterPro" id="IPR029017">
    <property type="entry name" value="Enolase-like_N"/>
</dbReference>
<dbReference type="InterPro" id="IPR020810">
    <property type="entry name" value="Enolase_C"/>
</dbReference>
<dbReference type="InterPro" id="IPR020809">
    <property type="entry name" value="Enolase_CS"/>
</dbReference>
<dbReference type="InterPro" id="IPR020811">
    <property type="entry name" value="Enolase_N"/>
</dbReference>
<dbReference type="NCBIfam" id="TIGR01060">
    <property type="entry name" value="eno"/>
    <property type="match status" value="1"/>
</dbReference>
<dbReference type="PANTHER" id="PTHR11902">
    <property type="entry name" value="ENOLASE"/>
    <property type="match status" value="1"/>
</dbReference>
<dbReference type="PANTHER" id="PTHR11902:SF1">
    <property type="entry name" value="ENOLASE"/>
    <property type="match status" value="1"/>
</dbReference>
<dbReference type="Pfam" id="PF00113">
    <property type="entry name" value="Enolase_C"/>
    <property type="match status" value="1"/>
</dbReference>
<dbReference type="Pfam" id="PF03952">
    <property type="entry name" value="Enolase_N"/>
    <property type="match status" value="1"/>
</dbReference>
<dbReference type="PIRSF" id="PIRSF001400">
    <property type="entry name" value="Enolase"/>
    <property type="match status" value="1"/>
</dbReference>
<dbReference type="PRINTS" id="PR00148">
    <property type="entry name" value="ENOLASE"/>
</dbReference>
<dbReference type="SFLD" id="SFLDF00002">
    <property type="entry name" value="enolase"/>
    <property type="match status" value="1"/>
</dbReference>
<dbReference type="SFLD" id="SFLDG00178">
    <property type="entry name" value="enolase"/>
    <property type="match status" value="1"/>
</dbReference>
<dbReference type="SMART" id="SM01192">
    <property type="entry name" value="Enolase_C"/>
    <property type="match status" value="1"/>
</dbReference>
<dbReference type="SMART" id="SM01193">
    <property type="entry name" value="Enolase_N"/>
    <property type="match status" value="1"/>
</dbReference>
<dbReference type="SUPFAM" id="SSF51604">
    <property type="entry name" value="Enolase C-terminal domain-like"/>
    <property type="match status" value="1"/>
</dbReference>
<dbReference type="SUPFAM" id="SSF54826">
    <property type="entry name" value="Enolase N-terminal domain-like"/>
    <property type="match status" value="1"/>
</dbReference>
<dbReference type="PROSITE" id="PS00164">
    <property type="entry name" value="ENOLASE"/>
    <property type="match status" value="1"/>
</dbReference>
<keyword id="KW-0963">Cytoplasm</keyword>
<keyword id="KW-0324">Glycolysis</keyword>
<keyword id="KW-0456">Lyase</keyword>
<keyword id="KW-0460">Magnesium</keyword>
<keyword id="KW-0479">Metal-binding</keyword>
<keyword id="KW-1185">Reference proteome</keyword>
<keyword id="KW-0964">Secreted</keyword>
<gene>
    <name evidence="2" type="primary">eno</name>
    <name type="ordered locus">STM2952</name>
</gene>
<feature type="initiator methionine" description="Removed" evidence="1">
    <location>
        <position position="1"/>
    </location>
</feature>
<feature type="chain" id="PRO_0000133960" description="Enolase">
    <location>
        <begin position="2"/>
        <end position="432"/>
    </location>
</feature>
<feature type="active site" description="Proton donor" evidence="2">
    <location>
        <position position="209"/>
    </location>
</feature>
<feature type="active site" description="Proton acceptor" evidence="2">
    <location>
        <position position="342"/>
    </location>
</feature>
<feature type="binding site" evidence="2">
    <location>
        <position position="167"/>
    </location>
    <ligand>
        <name>(2R)-2-phosphoglycerate</name>
        <dbReference type="ChEBI" id="CHEBI:58289"/>
    </ligand>
</feature>
<feature type="binding site" evidence="2">
    <location>
        <position position="246"/>
    </location>
    <ligand>
        <name>Mg(2+)</name>
        <dbReference type="ChEBI" id="CHEBI:18420"/>
    </ligand>
</feature>
<feature type="binding site" evidence="2">
    <location>
        <position position="290"/>
    </location>
    <ligand>
        <name>Mg(2+)</name>
        <dbReference type="ChEBI" id="CHEBI:18420"/>
    </ligand>
</feature>
<feature type="binding site" evidence="2">
    <location>
        <position position="317"/>
    </location>
    <ligand>
        <name>Mg(2+)</name>
        <dbReference type="ChEBI" id="CHEBI:18420"/>
    </ligand>
</feature>
<feature type="binding site" evidence="2">
    <location>
        <position position="342"/>
    </location>
    <ligand>
        <name>(2R)-2-phosphoglycerate</name>
        <dbReference type="ChEBI" id="CHEBI:58289"/>
    </ligand>
</feature>
<feature type="binding site" evidence="2">
    <location>
        <position position="371"/>
    </location>
    <ligand>
        <name>(2R)-2-phosphoglycerate</name>
        <dbReference type="ChEBI" id="CHEBI:58289"/>
    </ligand>
</feature>
<feature type="binding site" evidence="2">
    <location>
        <position position="372"/>
    </location>
    <ligand>
        <name>(2R)-2-phosphoglycerate</name>
        <dbReference type="ChEBI" id="CHEBI:58289"/>
    </ligand>
</feature>
<feature type="binding site" evidence="2">
    <location>
        <position position="393"/>
    </location>
    <ligand>
        <name>(2R)-2-phosphoglycerate</name>
        <dbReference type="ChEBI" id="CHEBI:58289"/>
    </ligand>
</feature>
<proteinExistence type="evidence at protein level"/>
<accession>P64076</accession>
<accession>Q8XGP6</accession>
<evidence type="ECO:0000250" key="1"/>
<evidence type="ECO:0000255" key="2">
    <source>
        <dbReference type="HAMAP-Rule" id="MF_00318"/>
    </source>
</evidence>
<evidence type="ECO:0000269" key="3">
    <source>
    </source>
</evidence>
<evidence type="ECO:0000305" key="4">
    <source>
    </source>
</evidence>
<protein>
    <recommendedName>
        <fullName evidence="2">Enolase</fullName>
        <ecNumber evidence="2 4">4.2.1.11</ecNumber>
    </recommendedName>
    <alternativeName>
        <fullName evidence="2">2-phospho-D-glycerate hydro-lyase</fullName>
    </alternativeName>
    <alternativeName>
        <fullName evidence="2">2-phosphoglycerate dehydratase</fullName>
    </alternativeName>
</protein>
<sequence>MSKIVKVIGREIIDSRGNPTVEAEVHLEGGFVGMAAAPSGASTGSREALELRDGDKSRFLGKGVTKAVGAVNGPIAQAILGKDAKDQAGIDKIMIDLDGTENKSNFGANAILAVSLANAKAAAAAKGMPLYEHIAELNGTPGKYSMPVPMMNIINGGEHADNNVDIQEFMIQPVGAKTVKEAIRMGSEVFHHLAKVLKGKGMNTAVGDEGGYAPNLGSNAEALAVIAEAVKAAGYELGKDITLAMDCAASEFYKDGKYVLAGEGNKAFTSEEFTHFLEELTKQYPIVSIEDGLDESDWDGFAYQTKVLGDKIQLVGDDLFVTNTKILKEGIEKGIANSILIKFNQIGSLTETLAAIKMAKDAGYTAVISHRSGETEDATIADLAVGTAAGQIKTGSMSRSDRVAKYNQLIRIEEALGEKAPYNGRKEIKGQA</sequence>
<organism>
    <name type="scientific">Salmonella typhimurium (strain LT2 / SGSC1412 / ATCC 700720)</name>
    <dbReference type="NCBI Taxonomy" id="99287"/>
    <lineage>
        <taxon>Bacteria</taxon>
        <taxon>Pseudomonadati</taxon>
        <taxon>Pseudomonadota</taxon>
        <taxon>Gammaproteobacteria</taxon>
        <taxon>Enterobacterales</taxon>
        <taxon>Enterobacteriaceae</taxon>
        <taxon>Salmonella</taxon>
    </lineage>
</organism>
<comment type="function">
    <text evidence="2 3">Catalyzes the reversible conversion of 2-phosphoglycerate (2-PG) into phosphoenolpyruvate (PEP) (PubMed:33245853). It is essential for the degradation of carbohydrates via glycolysis.</text>
</comment>
<comment type="function">
    <text evidence="3">'Moonlights' as a plasminogen receptor. Binds host (human) plasminogen; only protein purified from the cell surface binds plasminogen, soluble enolase does not (PubMed:33245853).</text>
</comment>
<comment type="catalytic activity">
    <reaction evidence="2 4">
        <text>(2R)-2-phosphoglycerate = phosphoenolpyruvate + H2O</text>
        <dbReference type="Rhea" id="RHEA:10164"/>
        <dbReference type="ChEBI" id="CHEBI:15377"/>
        <dbReference type="ChEBI" id="CHEBI:58289"/>
        <dbReference type="ChEBI" id="CHEBI:58702"/>
        <dbReference type="EC" id="4.2.1.11"/>
    </reaction>
    <physiologicalReaction direction="left-to-right" evidence="4">
        <dbReference type="Rhea" id="RHEA:10165"/>
    </physiologicalReaction>
</comment>
<comment type="cofactor">
    <cofactor evidence="2">
        <name>Mg(2+)</name>
        <dbReference type="ChEBI" id="CHEBI:18420"/>
    </cofactor>
    <text evidence="2">Binds a second Mg(2+) ion via substrate during catalysis.</text>
</comment>
<comment type="pathway">
    <text evidence="2">Carbohydrate degradation; glycolysis; pyruvate from D-glyceraldehyde 3-phosphate: step 4/5.</text>
</comment>
<comment type="subunit">
    <text evidence="2">Component of the RNA degradosome, a multiprotein complex involved in RNA processing and mRNA degradation.</text>
</comment>
<comment type="subcellular location">
    <subcellularLocation>
        <location evidence="2 4">Cytoplasm</location>
    </subcellularLocation>
    <subcellularLocation>
        <location evidence="2">Secreted</location>
    </subcellularLocation>
    <subcellularLocation>
        <location evidence="2 4">Cell surface</location>
    </subcellularLocation>
    <text evidence="2 4">Fractions of enolase are present in both the cytoplasm and on the cell surface (PubMed:33245853).</text>
</comment>
<comment type="similarity">
    <text evidence="2">Belongs to the enolase family.</text>
</comment>